<accession>Q9CGJ4</accession>
<proteinExistence type="inferred from homology"/>
<keyword id="KW-0067">ATP-binding</keyword>
<keyword id="KW-0436">Ligase</keyword>
<keyword id="KW-0460">Magnesium</keyword>
<keyword id="KW-0479">Metal-binding</keyword>
<keyword id="KW-0520">NAD</keyword>
<keyword id="KW-0547">Nucleotide-binding</keyword>
<keyword id="KW-1185">Reference proteome</keyword>
<sequence>MTLQDEIIKELGVKPVIDPKEEIRVSVDFLKDYLKKYPFIKSFVLGISGGQDSSLAGRLAQIAIEEMRQETADETYKFVAIRLPYGVQADEEDAQRALAFIQPDVSLTVNIKAAVEGQVAALNEAGIEVSDFNKGNIKARQRMITQYAVAGQYQGAVLGTDHAAENITGFFTKFGDGGADLLPLFRLNKRQGKALLAELGADPAIYEKVPTADLEEGKPGLADEIALGVTYNDIDDYTEGKVISEDAKAKIEAWWKKTQHKRHLPISVFDDFWK</sequence>
<gene>
    <name evidence="1" type="primary">nadE</name>
    <name type="ordered locus">LL1102</name>
    <name type="ORF">L0203</name>
</gene>
<reference key="1">
    <citation type="journal article" date="2001" name="Genome Res.">
        <title>The complete genome sequence of the lactic acid bacterium Lactococcus lactis ssp. lactis IL1403.</title>
        <authorList>
            <person name="Bolotin A."/>
            <person name="Wincker P."/>
            <person name="Mauger S."/>
            <person name="Jaillon O."/>
            <person name="Malarme K."/>
            <person name="Weissenbach J."/>
            <person name="Ehrlich S.D."/>
            <person name="Sorokin A."/>
        </authorList>
    </citation>
    <scope>NUCLEOTIDE SEQUENCE [LARGE SCALE GENOMIC DNA]</scope>
    <source>
        <strain>IL1403</strain>
    </source>
</reference>
<dbReference type="EC" id="6.3.1.5" evidence="1"/>
<dbReference type="EMBL" id="AE005176">
    <property type="protein sequence ID" value="AAK05200.1"/>
    <property type="molecule type" value="Genomic_DNA"/>
</dbReference>
<dbReference type="PIR" id="F86762">
    <property type="entry name" value="F86762"/>
</dbReference>
<dbReference type="RefSeq" id="NP_267258.1">
    <property type="nucleotide sequence ID" value="NC_002662.1"/>
</dbReference>
<dbReference type="RefSeq" id="WP_004255352.1">
    <property type="nucleotide sequence ID" value="NC_002662.1"/>
</dbReference>
<dbReference type="SMR" id="Q9CGJ4"/>
<dbReference type="PaxDb" id="272623-L0203"/>
<dbReference type="EnsemblBacteria" id="AAK05200">
    <property type="protein sequence ID" value="AAK05200"/>
    <property type="gene ID" value="L0203"/>
</dbReference>
<dbReference type="KEGG" id="lla:L0203"/>
<dbReference type="PATRIC" id="fig|272623.7.peg.1180"/>
<dbReference type="eggNOG" id="COG0171">
    <property type="taxonomic scope" value="Bacteria"/>
</dbReference>
<dbReference type="HOGENOM" id="CLU_059327_3_0_9"/>
<dbReference type="OrthoDB" id="9803818at2"/>
<dbReference type="UniPathway" id="UPA00253">
    <property type="reaction ID" value="UER00333"/>
</dbReference>
<dbReference type="Proteomes" id="UP000002196">
    <property type="component" value="Chromosome"/>
</dbReference>
<dbReference type="GO" id="GO:0005737">
    <property type="term" value="C:cytoplasm"/>
    <property type="evidence" value="ECO:0007669"/>
    <property type="project" value="InterPro"/>
</dbReference>
<dbReference type="GO" id="GO:0005524">
    <property type="term" value="F:ATP binding"/>
    <property type="evidence" value="ECO:0007669"/>
    <property type="project" value="UniProtKB-UniRule"/>
</dbReference>
<dbReference type="GO" id="GO:0004359">
    <property type="term" value="F:glutaminase activity"/>
    <property type="evidence" value="ECO:0007669"/>
    <property type="project" value="InterPro"/>
</dbReference>
<dbReference type="GO" id="GO:0046872">
    <property type="term" value="F:metal ion binding"/>
    <property type="evidence" value="ECO:0007669"/>
    <property type="project" value="UniProtKB-KW"/>
</dbReference>
<dbReference type="GO" id="GO:0003952">
    <property type="term" value="F:NAD+ synthase (glutamine-hydrolyzing) activity"/>
    <property type="evidence" value="ECO:0007669"/>
    <property type="project" value="InterPro"/>
</dbReference>
<dbReference type="GO" id="GO:0008795">
    <property type="term" value="F:NAD+ synthase activity"/>
    <property type="evidence" value="ECO:0007669"/>
    <property type="project" value="UniProtKB-UniRule"/>
</dbReference>
<dbReference type="GO" id="GO:0009435">
    <property type="term" value="P:NAD biosynthetic process"/>
    <property type="evidence" value="ECO:0007669"/>
    <property type="project" value="UniProtKB-UniRule"/>
</dbReference>
<dbReference type="CDD" id="cd00553">
    <property type="entry name" value="NAD_synthase"/>
    <property type="match status" value="1"/>
</dbReference>
<dbReference type="FunFam" id="3.40.50.620:FF:000015">
    <property type="entry name" value="NH(3)-dependent NAD(+) synthetase"/>
    <property type="match status" value="1"/>
</dbReference>
<dbReference type="Gene3D" id="3.40.50.620">
    <property type="entry name" value="HUPs"/>
    <property type="match status" value="1"/>
</dbReference>
<dbReference type="HAMAP" id="MF_00193">
    <property type="entry name" value="NadE_ammonia_dep"/>
    <property type="match status" value="1"/>
</dbReference>
<dbReference type="InterPro" id="IPR022310">
    <property type="entry name" value="NAD/GMP_synthase"/>
</dbReference>
<dbReference type="InterPro" id="IPR003694">
    <property type="entry name" value="NAD_synthase"/>
</dbReference>
<dbReference type="InterPro" id="IPR022926">
    <property type="entry name" value="NH(3)-dep_NAD(+)_synth"/>
</dbReference>
<dbReference type="InterPro" id="IPR014729">
    <property type="entry name" value="Rossmann-like_a/b/a_fold"/>
</dbReference>
<dbReference type="NCBIfam" id="TIGR00552">
    <property type="entry name" value="nadE"/>
    <property type="match status" value="1"/>
</dbReference>
<dbReference type="NCBIfam" id="NF001979">
    <property type="entry name" value="PRK00768.1"/>
    <property type="match status" value="1"/>
</dbReference>
<dbReference type="PANTHER" id="PTHR23090">
    <property type="entry name" value="NH 3 /GLUTAMINE-DEPENDENT NAD + SYNTHETASE"/>
    <property type="match status" value="1"/>
</dbReference>
<dbReference type="PANTHER" id="PTHR23090:SF7">
    <property type="entry name" value="NH(3)-DEPENDENT NAD(+) SYNTHETASE"/>
    <property type="match status" value="1"/>
</dbReference>
<dbReference type="Pfam" id="PF02540">
    <property type="entry name" value="NAD_synthase"/>
    <property type="match status" value="1"/>
</dbReference>
<dbReference type="SUPFAM" id="SSF52402">
    <property type="entry name" value="Adenine nucleotide alpha hydrolases-like"/>
    <property type="match status" value="1"/>
</dbReference>
<name>NADE_LACLA</name>
<feature type="chain" id="PRO_0000152175" description="NH(3)-dependent NAD(+) synthetase">
    <location>
        <begin position="1"/>
        <end position="274"/>
    </location>
</feature>
<feature type="binding site" evidence="1">
    <location>
        <begin position="46"/>
        <end position="53"/>
    </location>
    <ligand>
        <name>ATP</name>
        <dbReference type="ChEBI" id="CHEBI:30616"/>
    </ligand>
</feature>
<feature type="binding site" evidence="1">
    <location>
        <position position="52"/>
    </location>
    <ligand>
        <name>Mg(2+)</name>
        <dbReference type="ChEBI" id="CHEBI:18420"/>
    </ligand>
</feature>
<feature type="binding site" evidence="1">
    <location>
        <position position="140"/>
    </location>
    <ligand>
        <name>deamido-NAD(+)</name>
        <dbReference type="ChEBI" id="CHEBI:58437"/>
    </ligand>
</feature>
<feature type="binding site" evidence="1">
    <location>
        <position position="160"/>
    </location>
    <ligand>
        <name>ATP</name>
        <dbReference type="ChEBI" id="CHEBI:30616"/>
    </ligand>
</feature>
<feature type="binding site" evidence="1">
    <location>
        <position position="165"/>
    </location>
    <ligand>
        <name>Mg(2+)</name>
        <dbReference type="ChEBI" id="CHEBI:18420"/>
    </ligand>
</feature>
<feature type="binding site" evidence="1">
    <location>
        <position position="173"/>
    </location>
    <ligand>
        <name>deamido-NAD(+)</name>
        <dbReference type="ChEBI" id="CHEBI:58437"/>
    </ligand>
</feature>
<feature type="binding site" evidence="1">
    <location>
        <position position="180"/>
    </location>
    <ligand>
        <name>deamido-NAD(+)</name>
        <dbReference type="ChEBI" id="CHEBI:58437"/>
    </ligand>
</feature>
<feature type="binding site" evidence="1">
    <location>
        <position position="189"/>
    </location>
    <ligand>
        <name>ATP</name>
        <dbReference type="ChEBI" id="CHEBI:30616"/>
    </ligand>
</feature>
<feature type="binding site" evidence="1">
    <location>
        <position position="211"/>
    </location>
    <ligand>
        <name>ATP</name>
        <dbReference type="ChEBI" id="CHEBI:30616"/>
    </ligand>
</feature>
<feature type="binding site" evidence="1">
    <location>
        <begin position="260"/>
        <end position="261"/>
    </location>
    <ligand>
        <name>deamido-NAD(+)</name>
        <dbReference type="ChEBI" id="CHEBI:58437"/>
    </ligand>
</feature>
<comment type="function">
    <text evidence="1">Catalyzes the ATP-dependent amidation of deamido-NAD to form NAD. Uses ammonia as a nitrogen source.</text>
</comment>
<comment type="catalytic activity">
    <reaction evidence="1">
        <text>deamido-NAD(+) + NH4(+) + ATP = AMP + diphosphate + NAD(+) + H(+)</text>
        <dbReference type="Rhea" id="RHEA:21188"/>
        <dbReference type="ChEBI" id="CHEBI:15378"/>
        <dbReference type="ChEBI" id="CHEBI:28938"/>
        <dbReference type="ChEBI" id="CHEBI:30616"/>
        <dbReference type="ChEBI" id="CHEBI:33019"/>
        <dbReference type="ChEBI" id="CHEBI:57540"/>
        <dbReference type="ChEBI" id="CHEBI:58437"/>
        <dbReference type="ChEBI" id="CHEBI:456215"/>
        <dbReference type="EC" id="6.3.1.5"/>
    </reaction>
</comment>
<comment type="pathway">
    <text evidence="1">Cofactor biosynthesis; NAD(+) biosynthesis; NAD(+) from deamido-NAD(+) (ammonia route): step 1/1.</text>
</comment>
<comment type="subunit">
    <text evidence="1">Homodimer.</text>
</comment>
<comment type="similarity">
    <text evidence="1">Belongs to the NAD synthetase family.</text>
</comment>
<protein>
    <recommendedName>
        <fullName evidence="1">NH(3)-dependent NAD(+) synthetase</fullName>
        <ecNumber evidence="1">6.3.1.5</ecNumber>
    </recommendedName>
</protein>
<organism>
    <name type="scientific">Lactococcus lactis subsp. lactis (strain IL1403)</name>
    <name type="common">Streptococcus lactis</name>
    <dbReference type="NCBI Taxonomy" id="272623"/>
    <lineage>
        <taxon>Bacteria</taxon>
        <taxon>Bacillati</taxon>
        <taxon>Bacillota</taxon>
        <taxon>Bacilli</taxon>
        <taxon>Lactobacillales</taxon>
        <taxon>Streptococcaceae</taxon>
        <taxon>Lactococcus</taxon>
    </lineage>
</organism>
<evidence type="ECO:0000255" key="1">
    <source>
        <dbReference type="HAMAP-Rule" id="MF_00193"/>
    </source>
</evidence>